<organism>
    <name type="scientific">Lactobacillus johnsonii (strain CNCM I-12250 / La1 / NCC 533)</name>
    <dbReference type="NCBI Taxonomy" id="257314"/>
    <lineage>
        <taxon>Bacteria</taxon>
        <taxon>Bacillati</taxon>
        <taxon>Bacillota</taxon>
        <taxon>Bacilli</taxon>
        <taxon>Lactobacillales</taxon>
        <taxon>Lactobacillaceae</taxon>
        <taxon>Lactobacillus</taxon>
    </lineage>
</organism>
<name>Y1506_LACJO</name>
<proteinExistence type="inferred from homology"/>
<gene>
    <name type="ordered locus">LJ_1506</name>
</gene>
<keyword id="KW-1003">Cell membrane</keyword>
<keyword id="KW-0472">Membrane</keyword>
<keyword id="KW-0812">Transmembrane</keyword>
<keyword id="KW-1133">Transmembrane helix</keyword>
<protein>
    <recommendedName>
        <fullName evidence="1">UPF0154 protein LJ_1506</fullName>
    </recommendedName>
</protein>
<evidence type="ECO:0000255" key="1">
    <source>
        <dbReference type="HAMAP-Rule" id="MF_00363"/>
    </source>
</evidence>
<comment type="subcellular location">
    <subcellularLocation>
        <location evidence="1">Cell membrane</location>
        <topology evidence="1">Single-pass membrane protein</topology>
    </subcellularLocation>
</comment>
<comment type="similarity">
    <text evidence="1">Belongs to the UPF0154 family.</text>
</comment>
<reference key="1">
    <citation type="journal article" date="2004" name="Proc. Natl. Acad. Sci. U.S.A.">
        <title>The genome sequence of the probiotic intestinal bacterium Lactobacillus johnsonii NCC 533.</title>
        <authorList>
            <person name="Pridmore R.D."/>
            <person name="Berger B."/>
            <person name="Desiere F."/>
            <person name="Vilanova D."/>
            <person name="Barretto C."/>
            <person name="Pittet A.-C."/>
            <person name="Zwahlen M.-C."/>
            <person name="Rouvet M."/>
            <person name="Altermann E."/>
            <person name="Barrangou R."/>
            <person name="Mollet B."/>
            <person name="Mercenier A."/>
            <person name="Klaenhammer T."/>
            <person name="Arigoni F."/>
            <person name="Schell M.A."/>
        </authorList>
    </citation>
    <scope>NUCLEOTIDE SEQUENCE [LARGE SCALE GENOMIC DNA]</scope>
    <source>
        <strain>CNCM I-1225 / La1 / NCC 533</strain>
    </source>
</reference>
<dbReference type="EMBL" id="AE017198">
    <property type="protein sequence ID" value="AAS09274.1"/>
    <property type="molecule type" value="Genomic_DNA"/>
</dbReference>
<dbReference type="RefSeq" id="WP_003649044.1">
    <property type="nucleotide sequence ID" value="NC_005362.1"/>
</dbReference>
<dbReference type="SMR" id="Q74IR1"/>
<dbReference type="KEGG" id="ljo:LJ_1506"/>
<dbReference type="eggNOG" id="COG3763">
    <property type="taxonomic scope" value="Bacteria"/>
</dbReference>
<dbReference type="HOGENOM" id="CLU_180108_0_1_9"/>
<dbReference type="Proteomes" id="UP000000581">
    <property type="component" value="Chromosome"/>
</dbReference>
<dbReference type="GO" id="GO:0005886">
    <property type="term" value="C:plasma membrane"/>
    <property type="evidence" value="ECO:0007669"/>
    <property type="project" value="UniProtKB-SubCell"/>
</dbReference>
<dbReference type="HAMAP" id="MF_00363">
    <property type="entry name" value="UPF0154"/>
    <property type="match status" value="1"/>
</dbReference>
<dbReference type="InterPro" id="IPR005359">
    <property type="entry name" value="UPF0154"/>
</dbReference>
<dbReference type="Pfam" id="PF03672">
    <property type="entry name" value="UPF0154"/>
    <property type="match status" value="1"/>
</dbReference>
<feature type="chain" id="PRO_1000005629" description="UPF0154 protein LJ_1506">
    <location>
        <begin position="1"/>
        <end position="73"/>
    </location>
</feature>
<feature type="transmembrane region" description="Helical" evidence="1">
    <location>
        <begin position="3"/>
        <end position="23"/>
    </location>
</feature>
<accession>Q74IR1</accession>
<sequence>MNLGLAIFLIIIALLIGLVGGFYGARAYMKKYFQDNPPISEDMIAAMMAQMGQKPSAKKLNQVMNMMKHQQQK</sequence>